<keyword id="KW-0963">Cytoplasm</keyword>
<proteinExistence type="inferred from homology"/>
<organism>
    <name type="scientific">Yersinia pseudotuberculosis serotype IB (strain PB1/+)</name>
    <dbReference type="NCBI Taxonomy" id="502801"/>
    <lineage>
        <taxon>Bacteria</taxon>
        <taxon>Pseudomonadati</taxon>
        <taxon>Pseudomonadota</taxon>
        <taxon>Gammaproteobacteria</taxon>
        <taxon>Enterobacterales</taxon>
        <taxon>Yersiniaceae</taxon>
        <taxon>Yersinia</taxon>
    </lineage>
</organism>
<accession>B2JZC3</accession>
<feature type="chain" id="PRO_1000194883" description="Regulator of ribonuclease activity A">
    <location>
        <begin position="1"/>
        <end position="161"/>
    </location>
</feature>
<gene>
    <name evidence="1" type="primary">rraA</name>
    <name type="ordered locus">YPTS_0097</name>
</gene>
<protein>
    <recommendedName>
        <fullName evidence="1">Regulator of ribonuclease activity A</fullName>
    </recommendedName>
</protein>
<sequence>MKYDTSDLCDIYHEEVNVVEPLFSNFGGRTSFGGKITTVKCFEDNGLLFDLLEENGLGRVLVVDGGGSVRRALINAELAELALKNEWEGIVVYGAVRQVDDLAELDIGIQAMAAIPVGAADEGVGESDIRVNFGGVTFFSGDHLYADNTGIILSEDPLDIE</sequence>
<reference key="1">
    <citation type="submission" date="2008-04" db="EMBL/GenBank/DDBJ databases">
        <title>Complete sequence of Yersinia pseudotuberculosis PB1/+.</title>
        <authorList>
            <person name="Copeland A."/>
            <person name="Lucas S."/>
            <person name="Lapidus A."/>
            <person name="Glavina del Rio T."/>
            <person name="Dalin E."/>
            <person name="Tice H."/>
            <person name="Bruce D."/>
            <person name="Goodwin L."/>
            <person name="Pitluck S."/>
            <person name="Munk A.C."/>
            <person name="Brettin T."/>
            <person name="Detter J.C."/>
            <person name="Han C."/>
            <person name="Tapia R."/>
            <person name="Schmutz J."/>
            <person name="Larimer F."/>
            <person name="Land M."/>
            <person name="Hauser L."/>
            <person name="Challacombe J.F."/>
            <person name="Green L."/>
            <person name="Lindler L.E."/>
            <person name="Nikolich M.P."/>
            <person name="Richardson P."/>
        </authorList>
    </citation>
    <scope>NUCLEOTIDE SEQUENCE [LARGE SCALE GENOMIC DNA]</scope>
    <source>
        <strain>PB1/+</strain>
    </source>
</reference>
<comment type="function">
    <text evidence="1">Globally modulates RNA abundance by binding to RNase E (Rne) and regulating its endonucleolytic activity. Can modulate Rne action in a substrate-dependent manner by altering the composition of the degradosome. Modulates RNA-binding and helicase activities of the degradosome.</text>
</comment>
<comment type="subunit">
    <text evidence="1">Homotrimer. Binds to both RNA-binding sites in the C-terminal region of Rne and to RhlB.</text>
</comment>
<comment type="subcellular location">
    <subcellularLocation>
        <location evidence="1">Cytoplasm</location>
    </subcellularLocation>
</comment>
<comment type="similarity">
    <text evidence="1">Belongs to the RraA family.</text>
</comment>
<dbReference type="EMBL" id="CP001048">
    <property type="protein sequence ID" value="ACC87096.1"/>
    <property type="molecule type" value="Genomic_DNA"/>
</dbReference>
<dbReference type="RefSeq" id="WP_002208945.1">
    <property type="nucleotide sequence ID" value="NZ_CP009780.1"/>
</dbReference>
<dbReference type="SMR" id="B2JZC3"/>
<dbReference type="GeneID" id="57974491"/>
<dbReference type="KEGG" id="ypb:YPTS_0097"/>
<dbReference type="PATRIC" id="fig|502801.10.peg.3775"/>
<dbReference type="GO" id="GO:0005829">
    <property type="term" value="C:cytosol"/>
    <property type="evidence" value="ECO:0007669"/>
    <property type="project" value="TreeGrafter"/>
</dbReference>
<dbReference type="GO" id="GO:0060698">
    <property type="term" value="F:endoribonuclease inhibitor activity"/>
    <property type="evidence" value="ECO:0007669"/>
    <property type="project" value="UniProtKB-UniRule"/>
</dbReference>
<dbReference type="GO" id="GO:0019899">
    <property type="term" value="F:enzyme binding"/>
    <property type="evidence" value="ECO:0007669"/>
    <property type="project" value="UniProtKB-UniRule"/>
</dbReference>
<dbReference type="GO" id="GO:1902369">
    <property type="term" value="P:negative regulation of RNA catabolic process"/>
    <property type="evidence" value="ECO:0007669"/>
    <property type="project" value="TreeGrafter"/>
</dbReference>
<dbReference type="CDD" id="cd16841">
    <property type="entry name" value="RraA_family"/>
    <property type="match status" value="1"/>
</dbReference>
<dbReference type="Gene3D" id="3.50.30.40">
    <property type="entry name" value="Ribonuclease E inhibitor RraA/RraA-like"/>
    <property type="match status" value="1"/>
</dbReference>
<dbReference type="HAMAP" id="MF_00471">
    <property type="entry name" value="RraA"/>
    <property type="match status" value="1"/>
</dbReference>
<dbReference type="InterPro" id="IPR010203">
    <property type="entry name" value="RraA"/>
</dbReference>
<dbReference type="InterPro" id="IPR005493">
    <property type="entry name" value="RraA/RraA-like"/>
</dbReference>
<dbReference type="InterPro" id="IPR036704">
    <property type="entry name" value="RraA/RraA-like_sf"/>
</dbReference>
<dbReference type="InterPro" id="IPR014339">
    <property type="entry name" value="RraA_gpbac"/>
</dbReference>
<dbReference type="NCBIfam" id="TIGR01935">
    <property type="entry name" value="NOT-MenG"/>
    <property type="match status" value="1"/>
</dbReference>
<dbReference type="NCBIfam" id="NF006875">
    <property type="entry name" value="PRK09372.1"/>
    <property type="match status" value="1"/>
</dbReference>
<dbReference type="NCBIfam" id="TIGR02998">
    <property type="entry name" value="RraA_entero"/>
    <property type="match status" value="1"/>
</dbReference>
<dbReference type="PANTHER" id="PTHR33254">
    <property type="entry name" value="4-HYDROXY-4-METHYL-2-OXOGLUTARATE ALDOLASE 3-RELATED"/>
    <property type="match status" value="1"/>
</dbReference>
<dbReference type="PANTHER" id="PTHR33254:SF29">
    <property type="entry name" value="REGULATOR OF RIBONUCLEASE ACTIVITY A"/>
    <property type="match status" value="1"/>
</dbReference>
<dbReference type="Pfam" id="PF03737">
    <property type="entry name" value="RraA-like"/>
    <property type="match status" value="1"/>
</dbReference>
<dbReference type="SUPFAM" id="SSF89562">
    <property type="entry name" value="RraA-like"/>
    <property type="match status" value="1"/>
</dbReference>
<evidence type="ECO:0000255" key="1">
    <source>
        <dbReference type="HAMAP-Rule" id="MF_00471"/>
    </source>
</evidence>
<name>RRAA_YERPB</name>